<name>DAPE_NEIMF</name>
<dbReference type="EC" id="3.5.1.18" evidence="1"/>
<dbReference type="EMBL" id="AM421808">
    <property type="protein sequence ID" value="CAM10666.1"/>
    <property type="molecule type" value="Genomic_DNA"/>
</dbReference>
<dbReference type="RefSeq" id="WP_002248086.1">
    <property type="nucleotide sequence ID" value="NC_008767.1"/>
</dbReference>
<dbReference type="SMR" id="A1KUW7"/>
<dbReference type="KEGG" id="nmc:NMC1459"/>
<dbReference type="HOGENOM" id="CLU_021802_4_0_4"/>
<dbReference type="UniPathway" id="UPA00034">
    <property type="reaction ID" value="UER00021"/>
</dbReference>
<dbReference type="Proteomes" id="UP000002286">
    <property type="component" value="Chromosome"/>
</dbReference>
<dbReference type="GO" id="GO:0008777">
    <property type="term" value="F:acetylornithine deacetylase activity"/>
    <property type="evidence" value="ECO:0007669"/>
    <property type="project" value="TreeGrafter"/>
</dbReference>
<dbReference type="GO" id="GO:0050897">
    <property type="term" value="F:cobalt ion binding"/>
    <property type="evidence" value="ECO:0007669"/>
    <property type="project" value="UniProtKB-UniRule"/>
</dbReference>
<dbReference type="GO" id="GO:0009014">
    <property type="term" value="F:succinyl-diaminopimelate desuccinylase activity"/>
    <property type="evidence" value="ECO:0007669"/>
    <property type="project" value="UniProtKB-UniRule"/>
</dbReference>
<dbReference type="GO" id="GO:0008270">
    <property type="term" value="F:zinc ion binding"/>
    <property type="evidence" value="ECO:0007669"/>
    <property type="project" value="UniProtKB-UniRule"/>
</dbReference>
<dbReference type="GO" id="GO:0019877">
    <property type="term" value="P:diaminopimelate biosynthetic process"/>
    <property type="evidence" value="ECO:0007669"/>
    <property type="project" value="UniProtKB-UniRule"/>
</dbReference>
<dbReference type="GO" id="GO:0006526">
    <property type="term" value="P:L-arginine biosynthetic process"/>
    <property type="evidence" value="ECO:0007669"/>
    <property type="project" value="TreeGrafter"/>
</dbReference>
<dbReference type="GO" id="GO:0009089">
    <property type="term" value="P:lysine biosynthetic process via diaminopimelate"/>
    <property type="evidence" value="ECO:0007669"/>
    <property type="project" value="UniProtKB-UniRule"/>
</dbReference>
<dbReference type="CDD" id="cd03891">
    <property type="entry name" value="M20_DapE_proteobac"/>
    <property type="match status" value="1"/>
</dbReference>
<dbReference type="FunFam" id="3.30.70.360:FF:000011">
    <property type="entry name" value="Succinyl-diaminopimelate desuccinylase"/>
    <property type="match status" value="1"/>
</dbReference>
<dbReference type="FunFam" id="3.40.630.10:FF:000005">
    <property type="entry name" value="Succinyl-diaminopimelate desuccinylase"/>
    <property type="match status" value="1"/>
</dbReference>
<dbReference type="FunFam" id="3.40.630.10:FF:000010">
    <property type="entry name" value="Succinyl-diaminopimelate desuccinylase"/>
    <property type="match status" value="1"/>
</dbReference>
<dbReference type="Gene3D" id="3.40.630.10">
    <property type="entry name" value="Zn peptidases"/>
    <property type="match status" value="2"/>
</dbReference>
<dbReference type="HAMAP" id="MF_01690">
    <property type="entry name" value="DapE"/>
    <property type="match status" value="1"/>
</dbReference>
<dbReference type="InterPro" id="IPR036264">
    <property type="entry name" value="Bact_exopeptidase_dim_dom"/>
</dbReference>
<dbReference type="InterPro" id="IPR005941">
    <property type="entry name" value="DapE_proteobac"/>
</dbReference>
<dbReference type="InterPro" id="IPR002933">
    <property type="entry name" value="Peptidase_M20"/>
</dbReference>
<dbReference type="InterPro" id="IPR011650">
    <property type="entry name" value="Peptidase_M20_dimer"/>
</dbReference>
<dbReference type="InterPro" id="IPR050072">
    <property type="entry name" value="Peptidase_M20A"/>
</dbReference>
<dbReference type="NCBIfam" id="TIGR01246">
    <property type="entry name" value="dapE_proteo"/>
    <property type="match status" value="1"/>
</dbReference>
<dbReference type="NCBIfam" id="NF009557">
    <property type="entry name" value="PRK13009.1"/>
    <property type="match status" value="1"/>
</dbReference>
<dbReference type="PANTHER" id="PTHR43808">
    <property type="entry name" value="ACETYLORNITHINE DEACETYLASE"/>
    <property type="match status" value="1"/>
</dbReference>
<dbReference type="PANTHER" id="PTHR43808:SF31">
    <property type="entry name" value="N-ACETYL-L-CITRULLINE DEACETYLASE"/>
    <property type="match status" value="1"/>
</dbReference>
<dbReference type="Pfam" id="PF07687">
    <property type="entry name" value="M20_dimer"/>
    <property type="match status" value="1"/>
</dbReference>
<dbReference type="Pfam" id="PF01546">
    <property type="entry name" value="Peptidase_M20"/>
    <property type="match status" value="1"/>
</dbReference>
<dbReference type="SUPFAM" id="SSF55031">
    <property type="entry name" value="Bacterial exopeptidase dimerisation domain"/>
    <property type="match status" value="1"/>
</dbReference>
<dbReference type="SUPFAM" id="SSF53187">
    <property type="entry name" value="Zn-dependent exopeptidases"/>
    <property type="match status" value="1"/>
</dbReference>
<evidence type="ECO:0000255" key="1">
    <source>
        <dbReference type="HAMAP-Rule" id="MF_01690"/>
    </source>
</evidence>
<gene>
    <name evidence="1" type="primary">dapE</name>
    <name type="ordered locus">NMC1459</name>
</gene>
<keyword id="KW-0028">Amino-acid biosynthesis</keyword>
<keyword id="KW-0170">Cobalt</keyword>
<keyword id="KW-0220">Diaminopimelate biosynthesis</keyword>
<keyword id="KW-0378">Hydrolase</keyword>
<keyword id="KW-0457">Lysine biosynthesis</keyword>
<keyword id="KW-0479">Metal-binding</keyword>
<keyword id="KW-0862">Zinc</keyword>
<sequence>MTETQSLELAKELISRPSVTPDDRDCQKLLAERLHKIGFAAEELHFGDTKNIWLRRGTKAPVVCFAGHTDVVPTGPVEKWDSPPFEPAERDGRLYGRGAADMKTSIACFVTACERFVAEHPDHQGSIALLITSDEEGDALDGTTKVVDVLKARDELIDYCIVGEPTAVDKLGDMIKNGRRGSLSGNLTVKGKQGHIAYPHLAINPVHTFAPALLELTQEVWDEGNEYFPPTSFQISNINGGTGATNVIPGELNVKFNFRFSTESTEAGLKQRVHAILDKHGVQYDLQWSCSGQPFLTQAGKLTDVARAAIAETCGIEAELSTTGGTSDGRFIKAIAKELIELGPSNATIHQINENVRLDDIPKLSAVYEGILARLLAGNAV</sequence>
<protein>
    <recommendedName>
        <fullName evidence="1">Succinyl-diaminopimelate desuccinylase</fullName>
        <shortName evidence="1">SDAP desuccinylase</shortName>
        <ecNumber evidence="1">3.5.1.18</ecNumber>
    </recommendedName>
    <alternativeName>
        <fullName evidence="1">N-succinyl-LL-2,6-diaminoheptanedioate amidohydrolase</fullName>
    </alternativeName>
</protein>
<comment type="function">
    <text evidence="1">Catalyzes the hydrolysis of N-succinyl-L,L-diaminopimelic acid (SDAP), forming succinate and LL-2,6-diaminopimelate (DAP), an intermediate involved in the bacterial biosynthesis of lysine and meso-diaminopimelic acid, an essential component of bacterial cell walls.</text>
</comment>
<comment type="catalytic activity">
    <reaction evidence="1">
        <text>N-succinyl-(2S,6S)-2,6-diaminopimelate + H2O = (2S,6S)-2,6-diaminopimelate + succinate</text>
        <dbReference type="Rhea" id="RHEA:22608"/>
        <dbReference type="ChEBI" id="CHEBI:15377"/>
        <dbReference type="ChEBI" id="CHEBI:30031"/>
        <dbReference type="ChEBI" id="CHEBI:57609"/>
        <dbReference type="ChEBI" id="CHEBI:58087"/>
        <dbReference type="EC" id="3.5.1.18"/>
    </reaction>
</comment>
<comment type="cofactor">
    <cofactor evidence="1">
        <name>Zn(2+)</name>
        <dbReference type="ChEBI" id="CHEBI:29105"/>
    </cofactor>
    <cofactor evidence="1">
        <name>Co(2+)</name>
        <dbReference type="ChEBI" id="CHEBI:48828"/>
    </cofactor>
    <text evidence="1">Binds 2 Zn(2+) or Co(2+) ions per subunit.</text>
</comment>
<comment type="pathway">
    <text evidence="1">Amino-acid biosynthesis; L-lysine biosynthesis via DAP pathway; LL-2,6-diaminopimelate from (S)-tetrahydrodipicolinate (succinylase route): step 3/3.</text>
</comment>
<comment type="subunit">
    <text evidence="1">Homodimer.</text>
</comment>
<comment type="similarity">
    <text evidence="1">Belongs to the peptidase M20A family. DapE subfamily.</text>
</comment>
<accession>A1KUW7</accession>
<organism>
    <name type="scientific">Neisseria meningitidis serogroup C / serotype 2a (strain ATCC 700532 / DSM 15464 / FAM18)</name>
    <dbReference type="NCBI Taxonomy" id="272831"/>
    <lineage>
        <taxon>Bacteria</taxon>
        <taxon>Pseudomonadati</taxon>
        <taxon>Pseudomonadota</taxon>
        <taxon>Betaproteobacteria</taxon>
        <taxon>Neisseriales</taxon>
        <taxon>Neisseriaceae</taxon>
        <taxon>Neisseria</taxon>
    </lineage>
</organism>
<feature type="chain" id="PRO_0000375626" description="Succinyl-diaminopimelate desuccinylase">
    <location>
        <begin position="1"/>
        <end position="381"/>
    </location>
</feature>
<feature type="active site" evidence="1">
    <location>
        <position position="70"/>
    </location>
</feature>
<feature type="active site" description="Proton acceptor" evidence="1">
    <location>
        <position position="135"/>
    </location>
</feature>
<feature type="binding site" evidence="1">
    <location>
        <position position="68"/>
    </location>
    <ligand>
        <name>Zn(2+)</name>
        <dbReference type="ChEBI" id="CHEBI:29105"/>
        <label>1</label>
    </ligand>
</feature>
<feature type="binding site" evidence="1">
    <location>
        <position position="101"/>
    </location>
    <ligand>
        <name>Zn(2+)</name>
        <dbReference type="ChEBI" id="CHEBI:29105"/>
        <label>1</label>
    </ligand>
</feature>
<feature type="binding site" evidence="1">
    <location>
        <position position="101"/>
    </location>
    <ligand>
        <name>Zn(2+)</name>
        <dbReference type="ChEBI" id="CHEBI:29105"/>
        <label>2</label>
    </ligand>
</feature>
<feature type="binding site" evidence="1">
    <location>
        <position position="136"/>
    </location>
    <ligand>
        <name>Zn(2+)</name>
        <dbReference type="ChEBI" id="CHEBI:29105"/>
        <label>2</label>
    </ligand>
</feature>
<feature type="binding site" evidence="1">
    <location>
        <position position="164"/>
    </location>
    <ligand>
        <name>Zn(2+)</name>
        <dbReference type="ChEBI" id="CHEBI:29105"/>
        <label>1</label>
    </ligand>
</feature>
<feature type="binding site" evidence="1">
    <location>
        <position position="350"/>
    </location>
    <ligand>
        <name>Zn(2+)</name>
        <dbReference type="ChEBI" id="CHEBI:29105"/>
        <label>2</label>
    </ligand>
</feature>
<proteinExistence type="inferred from homology"/>
<reference key="1">
    <citation type="journal article" date="2007" name="PLoS Genet.">
        <title>Meningococcal genetic variation mechanisms viewed through comparative analysis of serogroup C strain FAM18.</title>
        <authorList>
            <person name="Bentley S.D."/>
            <person name="Vernikos G.S."/>
            <person name="Snyder L.A.S."/>
            <person name="Churcher C."/>
            <person name="Arrowsmith C."/>
            <person name="Chillingworth T."/>
            <person name="Cronin A."/>
            <person name="Davis P.H."/>
            <person name="Holroyd N.E."/>
            <person name="Jagels K."/>
            <person name="Maddison M."/>
            <person name="Moule S."/>
            <person name="Rabbinowitsch E."/>
            <person name="Sharp S."/>
            <person name="Unwin L."/>
            <person name="Whitehead S."/>
            <person name="Quail M.A."/>
            <person name="Achtman M."/>
            <person name="Barrell B.G."/>
            <person name="Saunders N.J."/>
            <person name="Parkhill J."/>
        </authorList>
    </citation>
    <scope>NUCLEOTIDE SEQUENCE [LARGE SCALE GENOMIC DNA]</scope>
    <source>
        <strain>ATCC 700532 / DSM 15464 / FAM18</strain>
    </source>
</reference>